<reference key="1">
    <citation type="journal article" date="2002" name="Nature">
        <title>The genome sequence of Schizosaccharomyces pombe.</title>
        <authorList>
            <person name="Wood V."/>
            <person name="Gwilliam R."/>
            <person name="Rajandream M.A."/>
            <person name="Lyne M.H."/>
            <person name="Lyne R."/>
            <person name="Stewart A."/>
            <person name="Sgouros J.G."/>
            <person name="Peat N."/>
            <person name="Hayles J."/>
            <person name="Baker S.G."/>
            <person name="Basham D."/>
            <person name="Bowman S."/>
            <person name="Brooks K."/>
            <person name="Brown D."/>
            <person name="Brown S."/>
            <person name="Chillingworth T."/>
            <person name="Churcher C.M."/>
            <person name="Collins M."/>
            <person name="Connor R."/>
            <person name="Cronin A."/>
            <person name="Davis P."/>
            <person name="Feltwell T."/>
            <person name="Fraser A."/>
            <person name="Gentles S."/>
            <person name="Goble A."/>
            <person name="Hamlin N."/>
            <person name="Harris D.E."/>
            <person name="Hidalgo J."/>
            <person name="Hodgson G."/>
            <person name="Holroyd S."/>
            <person name="Hornsby T."/>
            <person name="Howarth S."/>
            <person name="Huckle E.J."/>
            <person name="Hunt S."/>
            <person name="Jagels K."/>
            <person name="James K.D."/>
            <person name="Jones L."/>
            <person name="Jones M."/>
            <person name="Leather S."/>
            <person name="McDonald S."/>
            <person name="McLean J."/>
            <person name="Mooney P."/>
            <person name="Moule S."/>
            <person name="Mungall K.L."/>
            <person name="Murphy L.D."/>
            <person name="Niblett D."/>
            <person name="Odell C."/>
            <person name="Oliver K."/>
            <person name="O'Neil S."/>
            <person name="Pearson D."/>
            <person name="Quail M.A."/>
            <person name="Rabbinowitsch E."/>
            <person name="Rutherford K.M."/>
            <person name="Rutter S."/>
            <person name="Saunders D."/>
            <person name="Seeger K."/>
            <person name="Sharp S."/>
            <person name="Skelton J."/>
            <person name="Simmonds M.N."/>
            <person name="Squares R."/>
            <person name="Squares S."/>
            <person name="Stevens K."/>
            <person name="Taylor K."/>
            <person name="Taylor R.G."/>
            <person name="Tivey A."/>
            <person name="Walsh S.V."/>
            <person name="Warren T."/>
            <person name="Whitehead S."/>
            <person name="Woodward J.R."/>
            <person name="Volckaert G."/>
            <person name="Aert R."/>
            <person name="Robben J."/>
            <person name="Grymonprez B."/>
            <person name="Weltjens I."/>
            <person name="Vanstreels E."/>
            <person name="Rieger M."/>
            <person name="Schaefer M."/>
            <person name="Mueller-Auer S."/>
            <person name="Gabel C."/>
            <person name="Fuchs M."/>
            <person name="Duesterhoeft A."/>
            <person name="Fritzc C."/>
            <person name="Holzer E."/>
            <person name="Moestl D."/>
            <person name="Hilbert H."/>
            <person name="Borzym K."/>
            <person name="Langer I."/>
            <person name="Beck A."/>
            <person name="Lehrach H."/>
            <person name="Reinhardt R."/>
            <person name="Pohl T.M."/>
            <person name="Eger P."/>
            <person name="Zimmermann W."/>
            <person name="Wedler H."/>
            <person name="Wambutt R."/>
            <person name="Purnelle B."/>
            <person name="Goffeau A."/>
            <person name="Cadieu E."/>
            <person name="Dreano S."/>
            <person name="Gloux S."/>
            <person name="Lelaure V."/>
            <person name="Mottier S."/>
            <person name="Galibert F."/>
            <person name="Aves S.J."/>
            <person name="Xiang Z."/>
            <person name="Hunt C."/>
            <person name="Moore K."/>
            <person name="Hurst S.M."/>
            <person name="Lucas M."/>
            <person name="Rochet M."/>
            <person name="Gaillardin C."/>
            <person name="Tallada V.A."/>
            <person name="Garzon A."/>
            <person name="Thode G."/>
            <person name="Daga R.R."/>
            <person name="Cruzado L."/>
            <person name="Jimenez J."/>
            <person name="Sanchez M."/>
            <person name="del Rey F."/>
            <person name="Benito J."/>
            <person name="Dominguez A."/>
            <person name="Revuelta J.L."/>
            <person name="Moreno S."/>
            <person name="Armstrong J."/>
            <person name="Forsburg S.L."/>
            <person name="Cerutti L."/>
            <person name="Lowe T."/>
            <person name="McCombie W.R."/>
            <person name="Paulsen I."/>
            <person name="Potashkin J."/>
            <person name="Shpakovski G.V."/>
            <person name="Ussery D."/>
            <person name="Barrell B.G."/>
            <person name="Nurse P."/>
        </authorList>
    </citation>
    <scope>NUCLEOTIDE SEQUENCE [LARGE SCALE GENOMIC DNA]</scope>
    <source>
        <strain>972 / ATCC 24843</strain>
    </source>
</reference>
<reference key="2">
    <citation type="journal article" date="2005" name="J. Cell Sci.">
        <title>Yeast Mon2p is a highly conserved protein that functions in the cytoplasm-to-vacuole transport pathway and is required for Golgi homeostasis.</title>
        <authorList>
            <person name="Efe J.A."/>
            <person name="Plattner F."/>
            <person name="Hulo N."/>
            <person name="Kressler D."/>
            <person name="Emr S.D."/>
            <person name="Deloche O."/>
        </authorList>
    </citation>
    <scope>IDENTIFICATION</scope>
</reference>
<reference key="3">
    <citation type="journal article" date="2008" name="J. Proteome Res.">
        <title>Phosphoproteome analysis of fission yeast.</title>
        <authorList>
            <person name="Wilson-Grady J.T."/>
            <person name="Villen J."/>
            <person name="Gygi S.P."/>
        </authorList>
    </citation>
    <scope>PHOSPHORYLATION [LARGE SCALE ANALYSIS] AT SER-43 AND SER-660</scope>
    <scope>IDENTIFICATION BY MASS SPECTROMETRY</scope>
</reference>
<organism>
    <name type="scientific">Schizosaccharomyces pombe (strain 972 / ATCC 24843)</name>
    <name type="common">Fission yeast</name>
    <dbReference type="NCBI Taxonomy" id="284812"/>
    <lineage>
        <taxon>Eukaryota</taxon>
        <taxon>Fungi</taxon>
        <taxon>Dikarya</taxon>
        <taxon>Ascomycota</taxon>
        <taxon>Taphrinomycotina</taxon>
        <taxon>Schizosaccharomycetes</taxon>
        <taxon>Schizosaccharomycetales</taxon>
        <taxon>Schizosaccharomycetaceae</taxon>
        <taxon>Schizosaccharomyces</taxon>
    </lineage>
</organism>
<keyword id="KW-0333">Golgi apparatus</keyword>
<keyword id="KW-0472">Membrane</keyword>
<keyword id="KW-0597">Phosphoprotein</keyword>
<keyword id="KW-0653">Protein transport</keyword>
<keyword id="KW-1185">Reference proteome</keyword>
<keyword id="KW-0813">Transport</keyword>
<sequence length="1616" mass="181451">MSLYDSLLSNLQSINVDTRKKNADLKKLADGSLKFLYTNKNLSQDSLVSKLKGNEAFYKPFLFCCAKKIERHIYISLNSIQLLAINDALSPDILESLFNSLNAVIQLGQDSQLRVLQIIPIICTHYAASMKLPILISLFRICFNLHNSKNSVVSNAAAATLRQIVILVFDYLDYDTLAHKQEADLFLDSLSLFKGLCSLLSAGKSESLNVDHISTTFGLELLESILVNHHRLFQIPEFQDSVRKDLLPIITASLASMSDFPVALRISRILNIIFQHYVTSLTLDIEVIFSFIISSLDNSEAAWKKALFLEVLRSIFSNTNLLYLMYTLFDGNEGRKPIIKKLVTSLSRIVNEKPSVIGVGSRVVLADTFEDYSSTSSGNPPSSMEKVSGSFTGTKPEQIIGICRATILKTPCIEQFDKQEPPIIPFAYLVYLAMCSLASISNGIADFVFQFYEDVGKKEFTLLIEGIKCENFDSKEDSTARPQNIIKCQYGLISENWTSFLVAYSTFVSSALAVELLKFCLNSYVNFVSVCTLFGLETPRDALLTTLSNKAVPSNLLSGNMTHSASSSISHNGRLSTSTMFSVEGLKEAATTIAAIASYDSNHDEKQKCFSLREILFLRCLSSIAKVVGEKMGKGWKILFETFDKADIILNRSPTSKHLSTSSLNRVNSSNSNFQDSKSFSTLMDYELVSYKNELSELMYVTSSYSQPAYMEFLESLLAVITSSSVHPIQTLTAPRQSFNEDLLSANTKNSVYKTSANRSISGGIRLLRKSSEVFYSFSILETVCSCNLDRFLDSKLDHSGWSLISKSLSEVFKIINVAPELRTRAANCLANILVDVASRLSNENSPDSYAFQEIFFESLGMLLPVTEVSDNTSRGVEYDISTIGLEALVSILETVGHHVLHGWQYVFEMLRFNCLNGATCFGSEKGAKIVRLAFSCLQLICTDFLASLDTSNYLDLMDTLLVFCRQLEDANVSLTAVGLFWNVSDTLKNMFSTSDFSCAYNSVEDLYAFTSMKSKEILPEVLWIMLLVHLADLCENSWASVRNGAAQILFRIFNSQCSKLGTNAWASCCQLVIMKLLHSQPIQNVSDVNNKKDEDDHEQTSCLIISGIADVFSENMSLLLNVNGILDVLEEAFQLMLRLHSDIYPKICISNFKALRELSFSISEFGKENATFTLLIKLVFINWGRFCEVSFSERRLANISQEGLTLLIESVVFLLKAYNFGIEEIKDSLLQVRKAVFYEESTSFALDVDFLSSLQLAVESLTDLLISKFKLNHLVLELWSDVLTYAFNEEKTIRASLPTLICLSKKIFENAENVVENHSLDFLNRGTMQHMFESLLVPMRLKYRCPKASRVNQSTLPIWVLASKCFVRLMINCFKDLKGSDAIEDAEKMQCLFLLTVEATNSIISPNADYEYVWSLEDVFENEDVSSLKQLHNLWKPHLQLNCLSDEVAQYYITLCKGSFYYQMRNTEDMVISRSNLDIQKEAARNFFPSTESPVSNRRQRIAVDCFSILLDDYNSSYEHVSLTIRPILQSRLCWSLKRYVADKSVSGYLPLSKSQEMDMSTVAECLNNHPSLYSNPIHYLLRKAYHTTNASPVATSLNAILGQLTLKNEVLNAI</sequence>
<proteinExistence type="evidence at protein level"/>
<comment type="function">
    <text evidence="1">Required for traffic between late Golgi and early endosomes. Required for endocytosis and maintenance of vacuolar structure (By similarity).</text>
</comment>
<comment type="subunit">
    <text evidence="1">Homodimer.</text>
</comment>
<comment type="subcellular location">
    <subcellularLocation>
        <location evidence="1">Golgi apparatus membrane</location>
        <topology evidence="1">Peripheral membrane protein</topology>
    </subcellularLocation>
    <text evidence="1">Late Golgi.</text>
</comment>
<comment type="similarity">
    <text evidence="3">Belongs to the MON2 family.</text>
</comment>
<dbReference type="EMBL" id="CU329670">
    <property type="protein sequence ID" value="CAA91248.1"/>
    <property type="molecule type" value="Genomic_DNA"/>
</dbReference>
<dbReference type="PIR" id="T38288">
    <property type="entry name" value="S62504"/>
</dbReference>
<dbReference type="RefSeq" id="NP_594550.1">
    <property type="nucleotide sequence ID" value="NM_001019979.2"/>
</dbReference>
<dbReference type="SMR" id="Q09853"/>
<dbReference type="BioGRID" id="277988">
    <property type="interactions" value="1"/>
</dbReference>
<dbReference type="FunCoup" id="Q09853">
    <property type="interactions" value="559"/>
</dbReference>
<dbReference type="STRING" id="284812.Q09853"/>
<dbReference type="iPTMnet" id="Q09853"/>
<dbReference type="PaxDb" id="4896-SPAC23D3.13c.1"/>
<dbReference type="EnsemblFungi" id="SPAC23D3.13c.1">
    <property type="protein sequence ID" value="SPAC23D3.13c.1:pep"/>
    <property type="gene ID" value="SPAC23D3.13c"/>
</dbReference>
<dbReference type="KEGG" id="spo:2541486"/>
<dbReference type="PomBase" id="SPAC23D3.13c"/>
<dbReference type="VEuPathDB" id="FungiDB:SPAC23D3.13c"/>
<dbReference type="eggNOG" id="KOG1848">
    <property type="taxonomic scope" value="Eukaryota"/>
</dbReference>
<dbReference type="HOGENOM" id="CLU_001169_1_0_1"/>
<dbReference type="InParanoid" id="Q09853"/>
<dbReference type="OMA" id="AWRLCLN"/>
<dbReference type="PhylomeDB" id="Q09853"/>
<dbReference type="PRO" id="PR:Q09853"/>
<dbReference type="Proteomes" id="UP000002485">
    <property type="component" value="Chromosome I"/>
</dbReference>
<dbReference type="GO" id="GO:0005829">
    <property type="term" value="C:cytosol"/>
    <property type="evidence" value="ECO:0007005"/>
    <property type="project" value="PomBase"/>
</dbReference>
<dbReference type="GO" id="GO:0005768">
    <property type="term" value="C:endosome"/>
    <property type="evidence" value="ECO:0000266"/>
    <property type="project" value="PomBase"/>
</dbReference>
<dbReference type="GO" id="GO:0005794">
    <property type="term" value="C:Golgi apparatus"/>
    <property type="evidence" value="ECO:0007005"/>
    <property type="project" value="PomBase"/>
</dbReference>
<dbReference type="GO" id="GO:0000139">
    <property type="term" value="C:Golgi membrane"/>
    <property type="evidence" value="ECO:0007669"/>
    <property type="project" value="UniProtKB-SubCell"/>
</dbReference>
<dbReference type="GO" id="GO:0005085">
    <property type="term" value="F:guanyl-nucleotide exchange factor activity"/>
    <property type="evidence" value="ECO:0000266"/>
    <property type="project" value="PomBase"/>
</dbReference>
<dbReference type="GO" id="GO:0006897">
    <property type="term" value="P:endocytosis"/>
    <property type="evidence" value="ECO:0000266"/>
    <property type="project" value="PomBase"/>
</dbReference>
<dbReference type="GO" id="GO:0006886">
    <property type="term" value="P:intracellular protein transport"/>
    <property type="evidence" value="ECO:0000266"/>
    <property type="project" value="PomBase"/>
</dbReference>
<dbReference type="InterPro" id="IPR016024">
    <property type="entry name" value="ARM-type_fold"/>
</dbReference>
<dbReference type="InterPro" id="IPR032629">
    <property type="entry name" value="DCB_dom"/>
</dbReference>
<dbReference type="InterPro" id="IPR032691">
    <property type="entry name" value="Mon2/Sec7/BIG1-like_HUS"/>
</dbReference>
<dbReference type="InterPro" id="IPR032817">
    <property type="entry name" value="Mon2_C"/>
</dbReference>
<dbReference type="Pfam" id="PF16213">
    <property type="entry name" value="DCB"/>
    <property type="match status" value="1"/>
</dbReference>
<dbReference type="Pfam" id="PF16206">
    <property type="entry name" value="Mon2_C"/>
    <property type="match status" value="1"/>
</dbReference>
<dbReference type="Pfam" id="PF12783">
    <property type="entry name" value="Sec7-like_HUS"/>
    <property type="match status" value="1"/>
</dbReference>
<dbReference type="SUPFAM" id="SSF48371">
    <property type="entry name" value="ARM repeat"/>
    <property type="match status" value="1"/>
</dbReference>
<name>MON2_SCHPO</name>
<accession>Q09853</accession>
<protein>
    <recommendedName>
        <fullName>Protein MON2 homolog</fullName>
    </recommendedName>
</protein>
<feature type="chain" id="PRO_0000116419" description="Protein MON2 homolog">
    <location>
        <begin position="1"/>
        <end position="1616"/>
    </location>
</feature>
<feature type="modified residue" description="Phosphoserine" evidence="2">
    <location>
        <position position="43"/>
    </location>
</feature>
<feature type="modified residue" description="Phosphoserine" evidence="2">
    <location>
        <position position="660"/>
    </location>
</feature>
<evidence type="ECO:0000250" key="1"/>
<evidence type="ECO:0000269" key="2">
    <source>
    </source>
</evidence>
<evidence type="ECO:0000305" key="3"/>
<gene>
    <name type="primary">mon2</name>
    <name type="ORF">SPAC23D3.13c</name>
</gene>